<reference key="1">
    <citation type="journal article" date="2002" name="Proc. Natl. Acad. Sci. U.S.A.">
        <title>Extensive mosaic structure revealed by the complete genome sequence of uropathogenic Escherichia coli.</title>
        <authorList>
            <person name="Welch R.A."/>
            <person name="Burland V."/>
            <person name="Plunkett G. III"/>
            <person name="Redford P."/>
            <person name="Roesch P."/>
            <person name="Rasko D."/>
            <person name="Buckles E.L."/>
            <person name="Liou S.-R."/>
            <person name="Boutin A."/>
            <person name="Hackett J."/>
            <person name="Stroud D."/>
            <person name="Mayhew G.F."/>
            <person name="Rose D.J."/>
            <person name="Zhou S."/>
            <person name="Schwartz D.C."/>
            <person name="Perna N.T."/>
            <person name="Mobley H.L.T."/>
            <person name="Donnenberg M.S."/>
            <person name="Blattner F.R."/>
        </authorList>
    </citation>
    <scope>NUCLEOTIDE SEQUENCE [LARGE SCALE GENOMIC DNA]</scope>
    <source>
        <strain>CFT073 / ATCC 700928 / UPEC</strain>
    </source>
</reference>
<reference key="2">
    <citation type="journal article" date="2006" name="Mol. Microbiol.">
        <title>A new ferrous iron-uptake transporter, EfeU (YcdN), from Escherichia coli.</title>
        <authorList>
            <person name="Grosse C."/>
            <person name="Scherer J."/>
            <person name="Koch D."/>
            <person name="Otto M."/>
            <person name="Taudte N."/>
            <person name="Grass G."/>
        </authorList>
    </citation>
    <scope>INDUCTION</scope>
    <source>
        <strain>O6:K5:H1 / Nissle 1917</strain>
    </source>
</reference>
<feature type="signal peptide" description="Tat-type signal" evidence="3">
    <location>
        <begin position="1"/>
        <end position="35"/>
    </location>
</feature>
<feature type="chain" id="PRO_0000278319" description="Deferrochelatase">
    <location>
        <begin position="36"/>
        <end position="423"/>
    </location>
</feature>
<feature type="binding site" evidence="2">
    <location>
        <begin position="236"/>
        <end position="238"/>
    </location>
    <ligand>
        <name>heme b</name>
        <dbReference type="ChEBI" id="CHEBI:60344"/>
    </ligand>
</feature>
<feature type="binding site" description="proximal binding residue" evidence="2">
    <location>
        <position position="329"/>
    </location>
    <ligand>
        <name>heme b</name>
        <dbReference type="ChEBI" id="CHEBI:60344"/>
    </ligand>
    <ligandPart>
        <name>Fe</name>
        <dbReference type="ChEBI" id="CHEBI:18248"/>
    </ligandPart>
</feature>
<feature type="binding site" evidence="2">
    <location>
        <begin position="334"/>
        <end position="336"/>
    </location>
    <ligand>
        <name>heme b</name>
        <dbReference type="ChEBI" id="CHEBI:60344"/>
    </ligand>
</feature>
<feature type="binding site" evidence="2">
    <location>
        <position position="347"/>
    </location>
    <ligand>
        <name>heme b</name>
        <dbReference type="ChEBI" id="CHEBI:60344"/>
    </ligand>
</feature>
<sequence length="423" mass="46664">MQYEDENGVNEPSRRRLLKGIGALALAGSCPVAHAQKTQSAPGTLSPDARNEKQPFYGEHQAGILTPQQAAMMLVAFDVLASDKADLERLFRLLTQRFAFLTQGGAAPETPNPRLPPLDSGILGGYIAPDNLTITLSVGHSLFDERFGLAPQMPKKLQKMTRFPNDSLDAALCHGDVLLQICANTQDTVIHALRDIIKHTPDLLSVRWKREGFISDHAARSKGKETPINLLGFKDGTANPDSQNDKLMQKVVWVTADQQEPAWTIGGSYQAVRLIQFRVEFWDRTPLKEQQTIFGRDKQTGAPLGMLHEHDVPDYASDPEGKVIALDSHIRLANPRTAESESSLMLRRGYSYSLGVTNSGQLDMGLLFVCYQHDLEKGFLTVQKRLNGEALEEYVKPIGGGYFFALPGVKDANDYLGSALLRV</sequence>
<comment type="function">
    <text evidence="2">Involved in the recovery of exogenous heme iron. Extracts iron from heme while preserving the protoporphyrin ring intact.</text>
</comment>
<comment type="catalytic activity">
    <reaction evidence="2">
        <text>heme b + 2 H(+) = protoporphyrin IX + Fe(2+)</text>
        <dbReference type="Rhea" id="RHEA:22584"/>
        <dbReference type="ChEBI" id="CHEBI:15378"/>
        <dbReference type="ChEBI" id="CHEBI:29033"/>
        <dbReference type="ChEBI" id="CHEBI:57306"/>
        <dbReference type="ChEBI" id="CHEBI:60344"/>
        <dbReference type="EC" id="4.98.1.1"/>
    </reaction>
    <physiologicalReaction direction="left-to-right" evidence="2">
        <dbReference type="Rhea" id="RHEA:22585"/>
    </physiologicalReaction>
</comment>
<comment type="cofactor">
    <cofactor evidence="1">
        <name>heme b</name>
        <dbReference type="ChEBI" id="CHEBI:60344"/>
    </cofactor>
    <text evidence="1">Binds 1 heme b (iron(II)-protoporphyrin IX) group non-covalently per subunit.</text>
</comment>
<comment type="subunit">
    <text evidence="1">Homodimer. Part of a ferrous iron transporter composed of EfeU, EfeO and EfeB (By similarity).</text>
</comment>
<comment type="subcellular location">
    <subcellularLocation>
        <location evidence="1">Periplasm</location>
    </subcellularLocation>
</comment>
<comment type="induction">
    <text evidence="4">Expressed in response to iron deprivation at pH 7.</text>
</comment>
<comment type="PTM">
    <text>Predicted to be exported by the Tat system. The position of the signal peptide cleavage has not been experimentally proven.</text>
</comment>
<comment type="similarity">
    <text evidence="5">Belongs to the DyP-type peroxidase family. EfeB subfamily.</text>
</comment>
<name>EFEB_ECOL6</name>
<gene>
    <name type="primary">efeB</name>
    <name type="ordered locus">c1157</name>
</gene>
<protein>
    <recommendedName>
        <fullName>Deferrochelatase</fullName>
        <ecNumber evidence="2">4.98.1.1</ecNumber>
    </recommendedName>
    <alternativeName>
        <fullName>Peroxidase EfeB</fullName>
        <ecNumber evidence="2">1.11.1.-</ecNumber>
    </alternativeName>
</protein>
<proteinExistence type="evidence at transcript level"/>
<dbReference type="EC" id="4.98.1.1" evidence="2"/>
<dbReference type="EC" id="1.11.1.-" evidence="2"/>
<dbReference type="EMBL" id="AE014075">
    <property type="protein sequence ID" value="AAN79625.1"/>
    <property type="molecule type" value="Genomic_DNA"/>
</dbReference>
<dbReference type="RefSeq" id="WP_001199135.1">
    <property type="nucleotide sequence ID" value="NZ_CP051263.1"/>
</dbReference>
<dbReference type="SMR" id="Q8CW71"/>
<dbReference type="STRING" id="199310.c1157"/>
<dbReference type="PeroxiBase" id="5872">
    <property type="entry name" value="EcoDyPrx01_UTI89"/>
</dbReference>
<dbReference type="KEGG" id="ecc:c1157"/>
<dbReference type="eggNOG" id="COG2837">
    <property type="taxonomic scope" value="Bacteria"/>
</dbReference>
<dbReference type="HOGENOM" id="CLU_039488_0_0_6"/>
<dbReference type="BioCyc" id="ECOL199310:C1157-MONOMER"/>
<dbReference type="Proteomes" id="UP000001410">
    <property type="component" value="Chromosome"/>
</dbReference>
<dbReference type="GO" id="GO:0005829">
    <property type="term" value="C:cytosol"/>
    <property type="evidence" value="ECO:0007669"/>
    <property type="project" value="TreeGrafter"/>
</dbReference>
<dbReference type="GO" id="GO:0042597">
    <property type="term" value="C:periplasmic space"/>
    <property type="evidence" value="ECO:0007669"/>
    <property type="project" value="UniProtKB-SubCell"/>
</dbReference>
<dbReference type="GO" id="GO:0004325">
    <property type="term" value="F:ferrochelatase activity"/>
    <property type="evidence" value="ECO:0007669"/>
    <property type="project" value="RHEA"/>
</dbReference>
<dbReference type="GO" id="GO:0020037">
    <property type="term" value="F:heme binding"/>
    <property type="evidence" value="ECO:0007669"/>
    <property type="project" value="InterPro"/>
</dbReference>
<dbReference type="GO" id="GO:0046872">
    <property type="term" value="F:metal ion binding"/>
    <property type="evidence" value="ECO:0007669"/>
    <property type="project" value="UniProtKB-KW"/>
</dbReference>
<dbReference type="GO" id="GO:0004601">
    <property type="term" value="F:peroxidase activity"/>
    <property type="evidence" value="ECO:0007669"/>
    <property type="project" value="UniProtKB-KW"/>
</dbReference>
<dbReference type="GO" id="GO:0033212">
    <property type="term" value="P:iron import into cell"/>
    <property type="evidence" value="ECO:0007669"/>
    <property type="project" value="InterPro"/>
</dbReference>
<dbReference type="InterPro" id="IPR011008">
    <property type="entry name" value="Dimeric_a/b-barrel"/>
</dbReference>
<dbReference type="InterPro" id="IPR048328">
    <property type="entry name" value="Dyp_perox_C"/>
</dbReference>
<dbReference type="InterPro" id="IPR048327">
    <property type="entry name" value="Dyp_perox_N"/>
</dbReference>
<dbReference type="InterPro" id="IPR006314">
    <property type="entry name" value="Dyp_peroxidase"/>
</dbReference>
<dbReference type="InterPro" id="IPR006313">
    <property type="entry name" value="EfeB/EfeN"/>
</dbReference>
<dbReference type="InterPro" id="IPR006311">
    <property type="entry name" value="TAT_signal"/>
</dbReference>
<dbReference type="NCBIfam" id="TIGR01413">
    <property type="entry name" value="Dyp_perox_fam"/>
    <property type="match status" value="1"/>
</dbReference>
<dbReference type="NCBIfam" id="TIGR01412">
    <property type="entry name" value="tat_substr_1"/>
    <property type="match status" value="1"/>
</dbReference>
<dbReference type="PANTHER" id="PTHR30521:SF4">
    <property type="entry name" value="DEFERROCHELATASE"/>
    <property type="match status" value="1"/>
</dbReference>
<dbReference type="PANTHER" id="PTHR30521">
    <property type="entry name" value="DEFERROCHELATASE/PEROXIDASE"/>
    <property type="match status" value="1"/>
</dbReference>
<dbReference type="Pfam" id="PF20628">
    <property type="entry name" value="Dyp_perox_C"/>
    <property type="match status" value="1"/>
</dbReference>
<dbReference type="Pfam" id="PF04261">
    <property type="entry name" value="Dyp_perox_N"/>
    <property type="match status" value="1"/>
</dbReference>
<dbReference type="SUPFAM" id="SSF54909">
    <property type="entry name" value="Dimeric alpha+beta barrel"/>
    <property type="match status" value="1"/>
</dbReference>
<dbReference type="PROSITE" id="PS51404">
    <property type="entry name" value="DYP_PEROXIDASE"/>
    <property type="match status" value="1"/>
</dbReference>
<dbReference type="PROSITE" id="PS51318">
    <property type="entry name" value="TAT"/>
    <property type="match status" value="1"/>
</dbReference>
<organism>
    <name type="scientific">Escherichia coli O6:H1 (strain CFT073 / ATCC 700928 / UPEC)</name>
    <dbReference type="NCBI Taxonomy" id="199310"/>
    <lineage>
        <taxon>Bacteria</taxon>
        <taxon>Pseudomonadati</taxon>
        <taxon>Pseudomonadota</taxon>
        <taxon>Gammaproteobacteria</taxon>
        <taxon>Enterobacterales</taxon>
        <taxon>Enterobacteriaceae</taxon>
        <taxon>Escherichia</taxon>
    </lineage>
</organism>
<accession>Q8CW71</accession>
<keyword id="KW-0349">Heme</keyword>
<keyword id="KW-0408">Iron</keyword>
<keyword id="KW-0456">Lyase</keyword>
<keyword id="KW-0479">Metal-binding</keyword>
<keyword id="KW-0560">Oxidoreductase</keyword>
<keyword id="KW-0574">Periplasm</keyword>
<keyword id="KW-0575">Peroxidase</keyword>
<keyword id="KW-1185">Reference proteome</keyword>
<keyword id="KW-0732">Signal</keyword>
<evidence type="ECO:0000250" key="1"/>
<evidence type="ECO:0000250" key="2">
    <source>
        <dbReference type="UniProtKB" id="P31545"/>
    </source>
</evidence>
<evidence type="ECO:0000255" key="3">
    <source>
        <dbReference type="PROSITE-ProRule" id="PRU00648"/>
    </source>
</evidence>
<evidence type="ECO:0000269" key="4">
    <source>
    </source>
</evidence>
<evidence type="ECO:0000305" key="5"/>